<dbReference type="EC" id="2.7.11.1"/>
<dbReference type="EMBL" id="AH010548">
    <property type="protein sequence ID" value="AAK19940.1"/>
    <property type="molecule type" value="Genomic_DNA"/>
</dbReference>
<dbReference type="EMBL" id="AB097932">
    <property type="status" value="NOT_ANNOTATED_CDS"/>
    <property type="molecule type" value="Genomic_DNA"/>
</dbReference>
<dbReference type="EMBL" id="AB097933">
    <property type="status" value="NOT_ANNOTATED_CDS"/>
    <property type="molecule type" value="Genomic_DNA"/>
</dbReference>
<dbReference type="EMBL" id="DQ008354">
    <property type="protein sequence ID" value="AAY57656.1"/>
    <property type="molecule type" value="Genomic_DNA"/>
</dbReference>
<dbReference type="EMBL" id="DQ008355">
    <property type="protein sequence ID" value="AAY57727.1"/>
    <property type="molecule type" value="Genomic_DNA"/>
</dbReference>
<dbReference type="RefSeq" id="NP_040169.1">
    <property type="nucleotide sequence ID" value="NC_001348.1"/>
</dbReference>
<dbReference type="GeneID" id="1487678"/>
<dbReference type="KEGG" id="vg:1487678"/>
<dbReference type="Proteomes" id="UP000002603">
    <property type="component" value="Genome"/>
</dbReference>
<dbReference type="Proteomes" id="UP000008504">
    <property type="component" value="Genome"/>
</dbReference>
<dbReference type="Proteomes" id="UP000008505">
    <property type="component" value="Genome"/>
</dbReference>
<dbReference type="Proteomes" id="UP000008506">
    <property type="component" value="Genome"/>
</dbReference>
<dbReference type="GO" id="GO:0042025">
    <property type="term" value="C:host cell nucleus"/>
    <property type="evidence" value="ECO:0007669"/>
    <property type="project" value="UniProtKB-SubCell"/>
</dbReference>
<dbReference type="GO" id="GO:0019033">
    <property type="term" value="C:viral tegument"/>
    <property type="evidence" value="ECO:0007669"/>
    <property type="project" value="UniProtKB-SubCell"/>
</dbReference>
<dbReference type="GO" id="GO:0005524">
    <property type="term" value="F:ATP binding"/>
    <property type="evidence" value="ECO:0007669"/>
    <property type="project" value="UniProtKB-KW"/>
</dbReference>
<dbReference type="GO" id="GO:0106310">
    <property type="term" value="F:protein serine kinase activity"/>
    <property type="evidence" value="ECO:0007669"/>
    <property type="project" value="RHEA"/>
</dbReference>
<dbReference type="GO" id="GO:0004674">
    <property type="term" value="F:protein serine/threonine kinase activity"/>
    <property type="evidence" value="ECO:0007669"/>
    <property type="project" value="UniProtKB-KW"/>
</dbReference>
<dbReference type="Gene3D" id="1.10.510.10">
    <property type="entry name" value="Transferase(Phosphotransferase) domain 1"/>
    <property type="match status" value="1"/>
</dbReference>
<dbReference type="InterPro" id="IPR011009">
    <property type="entry name" value="Kinase-like_dom_sf"/>
</dbReference>
<dbReference type="InterPro" id="IPR000719">
    <property type="entry name" value="Prot_kinase_dom"/>
</dbReference>
<dbReference type="InterPro" id="IPR008271">
    <property type="entry name" value="Ser/Thr_kinase_AS"/>
</dbReference>
<dbReference type="SMART" id="SM00220">
    <property type="entry name" value="S_TKc"/>
    <property type="match status" value="1"/>
</dbReference>
<dbReference type="SUPFAM" id="SSF56112">
    <property type="entry name" value="Protein kinase-like (PK-like)"/>
    <property type="match status" value="1"/>
</dbReference>
<dbReference type="PROSITE" id="PS50011">
    <property type="entry name" value="PROTEIN_KINASE_DOM"/>
    <property type="match status" value="1"/>
</dbReference>
<dbReference type="PROSITE" id="PS00108">
    <property type="entry name" value="PROTEIN_KINASE_ST"/>
    <property type="match status" value="1"/>
</dbReference>
<reference key="1">
    <citation type="journal article" date="2001" name="Virology">
        <title>Identification and mapping of single nucleotide polymorphisms in the varicella-zoster virus genome.</title>
        <authorList>
            <person name="Faga B."/>
            <person name="Maury W."/>
            <person name="Bruckner D.A."/>
            <person name="Grose C."/>
        </authorList>
    </citation>
    <scope>NUCLEOTIDE SEQUENCE [LARGE SCALE GENOMIC DNA]</scope>
    <source>
        <strain>VZV-Oka</strain>
    </source>
</reference>
<reference key="2">
    <citation type="journal article" date="2002" name="J. Virol.">
        <title>Comparison of the complete DNA sequences of the Oka varicella vaccine and its parental virus.</title>
        <authorList>
            <person name="Gomi Y."/>
            <person name="Sunamachi H."/>
            <person name="Mori Y."/>
            <person name="Nagaike K."/>
            <person name="Takahashi M."/>
            <person name="Yamanishi K."/>
        </authorList>
    </citation>
    <scope>NUCLEOTIDE SEQUENCE [LARGE SCALE GENOMIC DNA]</scope>
    <source>
        <strain>Isolate Human/Japan/P-Oka/1970</strain>
        <strain>Oka varicella vaccine Biken (V-Oka-Biken)</strain>
    </source>
</reference>
<reference key="3">
    <citation type="journal article" date="2008" name="J. Virol.">
        <title>Complete DNA sequences of two oka strain varicella-zoster virus genomes.</title>
        <authorList>
            <person name="Tillieux S.L."/>
            <person name="Halsey W.S."/>
            <person name="Thomas E.S."/>
            <person name="Voycik J.J."/>
            <person name="Sathe G.M."/>
            <person name="Vassilev V."/>
        </authorList>
    </citation>
    <scope>NUCLEOTIDE SEQUENCE [LARGE SCALE GENOMIC DNA]</scope>
    <source>
        <strain>Oka varicella vaccine VarilRix (V-Oka-GSK)</strain>
        <strain>Oka varicella vaccine Varivax (V-Oka-Merck)</strain>
    </source>
</reference>
<reference key="4">
    <citation type="journal article" date="2002" name="J. Virol.">
        <title>Phosphorylation by the varicella-zoster virus ORF47 protein serine kinase determines whether endocytosed viral gE traffics to the trans-Golgi network or recycles to the cell membrane.</title>
        <authorList>
            <person name="Kenyon T.K."/>
            <person name="Cohen J.I."/>
            <person name="Grose C."/>
        </authorList>
    </citation>
    <scope>FUNCTION</scope>
</reference>
<evidence type="ECO:0000250" key="1"/>
<evidence type="ECO:0000255" key="2">
    <source>
        <dbReference type="PROSITE-ProRule" id="PRU00159"/>
    </source>
</evidence>
<evidence type="ECO:0000255" key="3">
    <source>
        <dbReference type="PROSITE-ProRule" id="PRU10027"/>
    </source>
</evidence>
<evidence type="ECO:0000256" key="4">
    <source>
        <dbReference type="SAM" id="MobiDB-lite"/>
    </source>
</evidence>
<evidence type="ECO:0000269" key="5">
    <source>
    </source>
</evidence>
<accession>Q6YP73</accession>
<comment type="function">
    <text evidence="1 5">Multifunctional serine/threonine kinase that plays a role in several processes including egress of virus particles from the nucleus, modulation of the actin cytoskeleton and regulation of viral and cellular gene expression. Regulates the nuclear localization of viral envelopment factor proteins 24 and 27, by phosphorylating the protein kinase ORF66, indicating a role in nuclear egress. Disrupts host nuclear lamins, including LMNA and LMNB1. Phosphorylates the viral Fc receptor composed of glycoproteins E (gE) and I (gI). Phosphorylation of glycoprotein E (gE) by UL13 alters its subcellular localization, from the host early endosome to the plasma membrane. Participates in the transcriptional regulation of cellular and viral mRNAs mainly by phosphorylating the viral transcriptional regulator IE63 (By similarity).</text>
</comment>
<comment type="catalytic activity">
    <reaction>
        <text>L-seryl-[protein] + ATP = O-phospho-L-seryl-[protein] + ADP + H(+)</text>
        <dbReference type="Rhea" id="RHEA:17989"/>
        <dbReference type="Rhea" id="RHEA-COMP:9863"/>
        <dbReference type="Rhea" id="RHEA-COMP:11604"/>
        <dbReference type="ChEBI" id="CHEBI:15378"/>
        <dbReference type="ChEBI" id="CHEBI:29999"/>
        <dbReference type="ChEBI" id="CHEBI:30616"/>
        <dbReference type="ChEBI" id="CHEBI:83421"/>
        <dbReference type="ChEBI" id="CHEBI:456216"/>
        <dbReference type="EC" id="2.7.11.1"/>
    </reaction>
</comment>
<comment type="catalytic activity">
    <reaction>
        <text>L-threonyl-[protein] + ATP = O-phospho-L-threonyl-[protein] + ADP + H(+)</text>
        <dbReference type="Rhea" id="RHEA:46608"/>
        <dbReference type="Rhea" id="RHEA-COMP:11060"/>
        <dbReference type="Rhea" id="RHEA-COMP:11605"/>
        <dbReference type="ChEBI" id="CHEBI:15378"/>
        <dbReference type="ChEBI" id="CHEBI:30013"/>
        <dbReference type="ChEBI" id="CHEBI:30616"/>
        <dbReference type="ChEBI" id="CHEBI:61977"/>
        <dbReference type="ChEBI" id="CHEBI:456216"/>
        <dbReference type="EC" id="2.7.11.1"/>
    </reaction>
</comment>
<comment type="subcellular location">
    <subcellularLocation>
        <location evidence="1">Virion tegument</location>
    </subcellularLocation>
    <subcellularLocation>
        <location evidence="1">Host nucleus</location>
    </subcellularLocation>
</comment>
<comment type="PTM">
    <text evidence="1">Autophosphorylated.</text>
</comment>
<comment type="miscellaneous">
    <text>Displays a substrate specificity similar to host CDC2.</text>
</comment>
<comment type="similarity">
    <text evidence="2">Belongs to the protein kinase superfamily. Ser/Thr protein kinase family.</text>
</comment>
<gene>
    <name type="ORF">ORF47</name>
</gene>
<protein>
    <recommendedName>
        <fullName>Serine/threonine-protein kinase UL13 homolog</fullName>
    </recommendedName>
    <alternativeName>
        <fullName>Protein kinase ORF47</fullName>
        <ecNumber>2.7.11.1</ecNumber>
    </alternativeName>
</protein>
<feature type="chain" id="PRO_0000385456" description="Serine/threonine-protein kinase UL13 homolog">
    <location>
        <begin position="1"/>
        <end position="510"/>
    </location>
</feature>
<feature type="domain" description="Protein kinase" evidence="2">
    <location>
        <begin position="132"/>
        <end position="458"/>
    </location>
</feature>
<feature type="region of interest" description="Disordered" evidence="4">
    <location>
        <begin position="1"/>
        <end position="63"/>
    </location>
</feature>
<feature type="active site" description="Proton acceptor" evidence="2 3">
    <location>
        <position position="257"/>
    </location>
</feature>
<feature type="binding site" evidence="2">
    <location>
        <begin position="138"/>
        <end position="146"/>
    </location>
    <ligand>
        <name>ATP</name>
        <dbReference type="ChEBI" id="CHEBI:30616"/>
    </ligand>
</feature>
<feature type="binding site" evidence="2">
    <location>
        <position position="157"/>
    </location>
    <ligand>
        <name>ATP</name>
        <dbReference type="ChEBI" id="CHEBI:30616"/>
    </ligand>
</feature>
<keyword id="KW-0067">ATP-binding</keyword>
<keyword id="KW-1048">Host nucleus</keyword>
<keyword id="KW-0945">Host-virus interaction</keyword>
<keyword id="KW-0418">Kinase</keyword>
<keyword id="KW-0547">Nucleotide-binding</keyword>
<keyword id="KW-0723">Serine/threonine-protein kinase</keyword>
<keyword id="KW-0808">Transferase</keyword>
<keyword id="KW-0946">Virion</keyword>
<keyword id="KW-0920">Virion tegument</keyword>
<sequence length="510" mass="57351">MDADDTPPNLQISPTAGPLRSHHNTDGHEPNATAADQQERESTNPTHGCVNHPWANPSTATCMESPERSQQTSLFLLKHGLTRDPIHQRERVDVFPQFNKPPWVFRISKLSRLIVPIFTLNEQLCFSKLQIRDRPRFAGRGTYGRVHIYPSSKIAVKTMDSRVFNRELINAILASEGSIRAGERLGISSIVCLLGFSLQTKQLLFPAYDMDMDEYIVRLSRRLTIPDHIDRKIAHVFLDLAQALTFLNRTCGLTHLDVKCGNIFLNVDNFASLEITTAVIGDYSLVTLNTYSLCTRAIFEVGNPSHPEHVLRVPRDASQMSFRLVLSHGTNQPPEILLDYINGTGLTKYTGTLPQRVGLAIDLYALGQALLEVILLGRLPGQLPISVHRTPHYHYYGHKLSPDLALDTLAYRCVLAPYILPSDIPGDLNYNPFIHAGELNTRISRNSLRRIFQCHAVRYGVTHSKLFEGIRIPASLYPATVVTSLLCHDNSEIRSDHPLLWHDRDWIGST</sequence>
<organismHost>
    <name type="scientific">Homo sapiens</name>
    <name type="common">Human</name>
    <dbReference type="NCBI Taxonomy" id="9606"/>
</organismHost>
<organism>
    <name type="scientific">Varicella-zoster virus (strain Oka vaccine)</name>
    <name type="common">HHV-3</name>
    <name type="synonym">Human herpesvirus 3</name>
    <dbReference type="NCBI Taxonomy" id="341980"/>
    <lineage>
        <taxon>Viruses</taxon>
        <taxon>Duplodnaviria</taxon>
        <taxon>Heunggongvirae</taxon>
        <taxon>Peploviricota</taxon>
        <taxon>Herviviricetes</taxon>
        <taxon>Herpesvirales</taxon>
        <taxon>Orthoherpesviridae</taxon>
        <taxon>Alphaherpesvirinae</taxon>
        <taxon>Varicellovirus</taxon>
        <taxon>Varicellovirus humanalpha3</taxon>
        <taxon>Human herpesvirus 3</taxon>
    </lineage>
</organism>
<name>UL13_VZVO</name>
<proteinExistence type="inferred from homology"/>